<comment type="function">
    <text evidence="1">Involved in the synthesis of autoinducer 2 (AI-2) which is secreted by bacteria and is used to communicate both the cell density and the metabolic potential of the environment. The regulation of gene expression in response to changes in cell density is called quorum sensing. Catalyzes the transformation of S-ribosylhomocysteine (RHC) to homocysteine (HC) and 4,5-dihydroxy-2,3-pentadione (DPD).</text>
</comment>
<comment type="catalytic activity">
    <reaction evidence="1">
        <text>S-(5-deoxy-D-ribos-5-yl)-L-homocysteine = (S)-4,5-dihydroxypentane-2,3-dione + L-homocysteine</text>
        <dbReference type="Rhea" id="RHEA:17753"/>
        <dbReference type="ChEBI" id="CHEBI:29484"/>
        <dbReference type="ChEBI" id="CHEBI:58195"/>
        <dbReference type="ChEBI" id="CHEBI:58199"/>
        <dbReference type="EC" id="4.4.1.21"/>
    </reaction>
</comment>
<comment type="cofactor">
    <cofactor evidence="1">
        <name>Fe cation</name>
        <dbReference type="ChEBI" id="CHEBI:24875"/>
    </cofactor>
    <text evidence="1">Binds 1 Fe cation per subunit.</text>
</comment>
<comment type="subunit">
    <text evidence="1">Homodimer.</text>
</comment>
<comment type="similarity">
    <text evidence="1">Belongs to the LuxS family.</text>
</comment>
<name>LUXS_PROMH</name>
<evidence type="ECO:0000255" key="1">
    <source>
        <dbReference type="HAMAP-Rule" id="MF_00091"/>
    </source>
</evidence>
<gene>
    <name evidence="1" type="primary">luxS</name>
    <name type="ordered locus">PMI0379</name>
</gene>
<keyword id="KW-0071">Autoinducer synthesis</keyword>
<keyword id="KW-0408">Iron</keyword>
<keyword id="KW-0456">Lyase</keyword>
<keyword id="KW-0479">Metal-binding</keyword>
<keyword id="KW-0673">Quorum sensing</keyword>
<keyword id="KW-1185">Reference proteome</keyword>
<accession>B4EUW0</accession>
<protein>
    <recommendedName>
        <fullName evidence="1">S-ribosylhomocysteine lyase</fullName>
        <ecNumber evidence="1">4.4.1.21</ecNumber>
    </recommendedName>
    <alternativeName>
        <fullName evidence="1">AI-2 synthesis protein</fullName>
    </alternativeName>
    <alternativeName>
        <fullName evidence="1">Autoinducer-2 production protein LuxS</fullName>
    </alternativeName>
</protein>
<feature type="chain" id="PRO_1000093319" description="S-ribosylhomocysteine lyase">
    <location>
        <begin position="1"/>
        <end position="171"/>
    </location>
</feature>
<feature type="binding site" evidence="1">
    <location>
        <position position="54"/>
    </location>
    <ligand>
        <name>Fe cation</name>
        <dbReference type="ChEBI" id="CHEBI:24875"/>
    </ligand>
</feature>
<feature type="binding site" evidence="1">
    <location>
        <position position="58"/>
    </location>
    <ligand>
        <name>Fe cation</name>
        <dbReference type="ChEBI" id="CHEBI:24875"/>
    </ligand>
</feature>
<feature type="binding site" evidence="1">
    <location>
        <position position="128"/>
    </location>
    <ligand>
        <name>Fe cation</name>
        <dbReference type="ChEBI" id="CHEBI:24875"/>
    </ligand>
</feature>
<organism>
    <name type="scientific">Proteus mirabilis (strain HI4320)</name>
    <dbReference type="NCBI Taxonomy" id="529507"/>
    <lineage>
        <taxon>Bacteria</taxon>
        <taxon>Pseudomonadati</taxon>
        <taxon>Pseudomonadota</taxon>
        <taxon>Gammaproteobacteria</taxon>
        <taxon>Enterobacterales</taxon>
        <taxon>Morganellaceae</taxon>
        <taxon>Proteus</taxon>
    </lineage>
</organism>
<reference key="1">
    <citation type="journal article" date="2008" name="J. Bacteriol.">
        <title>Complete genome sequence of uropathogenic Proteus mirabilis, a master of both adherence and motility.</title>
        <authorList>
            <person name="Pearson M.M."/>
            <person name="Sebaihia M."/>
            <person name="Churcher C."/>
            <person name="Quail M.A."/>
            <person name="Seshasayee A.S."/>
            <person name="Luscombe N.M."/>
            <person name="Abdellah Z."/>
            <person name="Arrosmith C."/>
            <person name="Atkin B."/>
            <person name="Chillingworth T."/>
            <person name="Hauser H."/>
            <person name="Jagels K."/>
            <person name="Moule S."/>
            <person name="Mungall K."/>
            <person name="Norbertczak H."/>
            <person name="Rabbinowitsch E."/>
            <person name="Walker D."/>
            <person name="Whithead S."/>
            <person name="Thomson N.R."/>
            <person name="Rather P.N."/>
            <person name="Parkhill J."/>
            <person name="Mobley H.L.T."/>
        </authorList>
    </citation>
    <scope>NUCLEOTIDE SEQUENCE [LARGE SCALE GENOMIC DNA]</scope>
    <source>
        <strain>HI4320</strain>
    </source>
</reference>
<proteinExistence type="inferred from homology"/>
<sequence>MPLLDSFTVDHTRMSAPAVRVAKTMKTPSGDTITVFDLRFTVPNKKAMPEKGIHTLEHLFAGFMRNHLNGEGVEIIDISPMGCRTGFYMSLIGQPDEQRVANAWKAAMEDVLKVKDQNHIPELNVYQCGTYEMHSLAEAQDIARDILSHTIGINHNDELALPEDKLKELQI</sequence>
<dbReference type="EC" id="4.4.1.21" evidence="1"/>
<dbReference type="EMBL" id="AM942759">
    <property type="protein sequence ID" value="CAR40974.1"/>
    <property type="molecule type" value="Genomic_DNA"/>
</dbReference>
<dbReference type="RefSeq" id="WP_004244776.1">
    <property type="nucleotide sequence ID" value="NC_010554.1"/>
</dbReference>
<dbReference type="SMR" id="B4EUW0"/>
<dbReference type="EnsemblBacteria" id="CAR40974">
    <property type="protein sequence ID" value="CAR40974"/>
    <property type="gene ID" value="PMI0379"/>
</dbReference>
<dbReference type="GeneID" id="6801513"/>
<dbReference type="KEGG" id="pmr:PMI0379"/>
<dbReference type="eggNOG" id="COG1854">
    <property type="taxonomic scope" value="Bacteria"/>
</dbReference>
<dbReference type="HOGENOM" id="CLU_107531_2_0_6"/>
<dbReference type="Proteomes" id="UP000008319">
    <property type="component" value="Chromosome"/>
</dbReference>
<dbReference type="GO" id="GO:0005506">
    <property type="term" value="F:iron ion binding"/>
    <property type="evidence" value="ECO:0007669"/>
    <property type="project" value="InterPro"/>
</dbReference>
<dbReference type="GO" id="GO:0043768">
    <property type="term" value="F:S-ribosylhomocysteine lyase activity"/>
    <property type="evidence" value="ECO:0007669"/>
    <property type="project" value="UniProtKB-UniRule"/>
</dbReference>
<dbReference type="GO" id="GO:0009372">
    <property type="term" value="P:quorum sensing"/>
    <property type="evidence" value="ECO:0007669"/>
    <property type="project" value="UniProtKB-UniRule"/>
</dbReference>
<dbReference type="FunFam" id="3.30.1360.80:FF:000001">
    <property type="entry name" value="S-ribosylhomocysteine lyase"/>
    <property type="match status" value="1"/>
</dbReference>
<dbReference type="Gene3D" id="3.30.1360.80">
    <property type="entry name" value="S-ribosylhomocysteinase (LuxS)"/>
    <property type="match status" value="1"/>
</dbReference>
<dbReference type="HAMAP" id="MF_00091">
    <property type="entry name" value="LuxS"/>
    <property type="match status" value="1"/>
</dbReference>
<dbReference type="InterPro" id="IPR037005">
    <property type="entry name" value="LuxS_sf"/>
</dbReference>
<dbReference type="InterPro" id="IPR011249">
    <property type="entry name" value="Metalloenz_LuxS/M16"/>
</dbReference>
<dbReference type="InterPro" id="IPR003815">
    <property type="entry name" value="S-ribosylhomocysteinase"/>
</dbReference>
<dbReference type="NCBIfam" id="NF002602">
    <property type="entry name" value="PRK02260.1-2"/>
    <property type="match status" value="1"/>
</dbReference>
<dbReference type="PANTHER" id="PTHR35799">
    <property type="entry name" value="S-RIBOSYLHOMOCYSTEINE LYASE"/>
    <property type="match status" value="1"/>
</dbReference>
<dbReference type="PANTHER" id="PTHR35799:SF1">
    <property type="entry name" value="S-RIBOSYLHOMOCYSTEINE LYASE"/>
    <property type="match status" value="1"/>
</dbReference>
<dbReference type="Pfam" id="PF02664">
    <property type="entry name" value="LuxS"/>
    <property type="match status" value="1"/>
</dbReference>
<dbReference type="PIRSF" id="PIRSF006160">
    <property type="entry name" value="AI2"/>
    <property type="match status" value="1"/>
</dbReference>
<dbReference type="PRINTS" id="PR01487">
    <property type="entry name" value="LUXSPROTEIN"/>
</dbReference>
<dbReference type="SUPFAM" id="SSF63411">
    <property type="entry name" value="LuxS/MPP-like metallohydrolase"/>
    <property type="match status" value="1"/>
</dbReference>